<sequence length="192" mass="20578">MLTIDTTIEWLGKFNEKIQENKAYLSELDGPIGDGDHGANMARGMSETMKALEVSNFGNVSEIFKKVAMTLMSKVGGASGPLYGSAFLAMSKTAIETLDTSELIYAGLEAIQKRGKAQVGEKTMVDIWSAFLNDLQTDSASKDNLEKVVKASAGLLATKGRASYLGERSIGHIDPGTQSSAYLFETLLEVVA</sequence>
<feature type="chain" id="PRO_0000270535" description="PTS-dependent dihydroxyacetone kinase, ADP-binding subunit DhaL">
    <location>
        <begin position="1"/>
        <end position="192"/>
    </location>
</feature>
<feature type="domain" description="DhaL" evidence="2">
    <location>
        <begin position="5"/>
        <end position="189"/>
    </location>
</feature>
<feature type="binding site" evidence="3 7">
    <location>
        <position position="29"/>
    </location>
    <ligand>
        <name>Mg(2+)</name>
        <dbReference type="ChEBI" id="CHEBI:18420"/>
    </ligand>
</feature>
<feature type="binding site" evidence="3 7">
    <location>
        <position position="34"/>
    </location>
    <ligand>
        <name>Mg(2+)</name>
        <dbReference type="ChEBI" id="CHEBI:18420"/>
    </ligand>
</feature>
<feature type="binding site" evidence="3 7">
    <location>
        <position position="36"/>
    </location>
    <ligand>
        <name>Mg(2+)</name>
        <dbReference type="ChEBI" id="CHEBI:18420"/>
    </ligand>
</feature>
<feature type="binding site" evidence="3 7">
    <location>
        <begin position="37"/>
        <end position="40"/>
    </location>
    <ligand>
        <name>ADP</name>
        <dbReference type="ChEBI" id="CHEBI:456216"/>
    </ligand>
</feature>
<feature type="binding site" evidence="3 7">
    <location>
        <begin position="78"/>
        <end position="79"/>
    </location>
    <ligand>
        <name>ADP</name>
        <dbReference type="ChEBI" id="CHEBI:456216"/>
    </ligand>
</feature>
<feature type="binding site" evidence="3 7">
    <location>
        <position position="115"/>
    </location>
    <ligand>
        <name>ADP</name>
        <dbReference type="ChEBI" id="CHEBI:456216"/>
    </ligand>
</feature>
<feature type="binding site" evidence="3 7">
    <location>
        <position position="124"/>
    </location>
    <ligand>
        <name>ADP</name>
        <dbReference type="ChEBI" id="CHEBI:456216"/>
    </ligand>
</feature>
<feature type="binding site" evidence="6">
    <location>
        <position position="161"/>
    </location>
    <ligand>
        <name>ADP</name>
        <dbReference type="ChEBI" id="CHEBI:456216"/>
    </ligand>
</feature>
<feature type="binding site" evidence="3 7">
    <location>
        <begin position="174"/>
        <end position="176"/>
    </location>
    <ligand>
        <name>ADP</name>
        <dbReference type="ChEBI" id="CHEBI:456216"/>
    </ligand>
</feature>
<feature type="mutagenesis site" description="Reduces activity 3-fold." evidence="3">
    <original>R</original>
    <variation>A</variation>
    <location>
        <position position="114"/>
    </location>
</feature>
<feature type="mutagenesis site" description="Reduces activity 100-fold." evidence="3">
    <original>R</original>
    <variation>E</variation>
    <location>
        <position position="114"/>
    </location>
</feature>
<feature type="mutagenesis site" description="Loss of activity." evidence="3">
    <original>R</original>
    <variation>A</variation>
    <location>
        <position position="161"/>
    </location>
</feature>
<feature type="mutagenesis site" description="Reduces activity about 20-fold." evidence="3">
    <original>Y</original>
    <variation>A</variation>
    <location>
        <position position="164"/>
    </location>
</feature>
<feature type="helix" evidence="8">
    <location>
        <begin position="4"/>
        <end position="20"/>
    </location>
</feature>
<feature type="helix" evidence="8">
    <location>
        <begin position="22"/>
        <end position="28"/>
    </location>
</feature>
<feature type="turn" evidence="8">
    <location>
        <begin position="29"/>
        <end position="32"/>
    </location>
</feature>
<feature type="helix" evidence="8">
    <location>
        <begin position="37"/>
        <end position="54"/>
    </location>
</feature>
<feature type="helix" evidence="8">
    <location>
        <begin position="60"/>
        <end position="74"/>
    </location>
</feature>
<feature type="helix" evidence="8">
    <location>
        <begin position="79"/>
        <end position="94"/>
    </location>
</feature>
<feature type="helix" evidence="8">
    <location>
        <begin position="100"/>
        <end position="115"/>
    </location>
</feature>
<feature type="strand" evidence="8">
    <location>
        <begin position="121"/>
        <end position="123"/>
    </location>
</feature>
<feature type="helix" evidence="8">
    <location>
        <begin position="125"/>
        <end position="136"/>
    </location>
</feature>
<feature type="helix" evidence="8">
    <location>
        <begin position="142"/>
        <end position="151"/>
    </location>
</feature>
<feature type="helix" evidence="8">
    <location>
        <begin position="152"/>
        <end position="154"/>
    </location>
</feature>
<feature type="helix" evidence="8">
    <location>
        <begin position="161"/>
        <end position="169"/>
    </location>
</feature>
<feature type="helix" evidence="8">
    <location>
        <begin position="175"/>
        <end position="191"/>
    </location>
</feature>
<evidence type="ECO:0000250" key="1">
    <source>
        <dbReference type="UniProtKB" id="Q92EU3"/>
    </source>
</evidence>
<evidence type="ECO:0000255" key="2">
    <source>
        <dbReference type="PROSITE-ProRule" id="PRU00813"/>
    </source>
</evidence>
<evidence type="ECO:0000269" key="3">
    <source>
    </source>
</evidence>
<evidence type="ECO:0000303" key="4">
    <source>
    </source>
</evidence>
<evidence type="ECO:0000305" key="5"/>
<evidence type="ECO:0000305" key="6">
    <source>
    </source>
</evidence>
<evidence type="ECO:0007744" key="7">
    <source>
        <dbReference type="PDB" id="3CR3"/>
    </source>
</evidence>
<evidence type="ECO:0007829" key="8">
    <source>
        <dbReference type="PDB" id="3CR3"/>
    </source>
</evidence>
<comment type="function">
    <text evidence="3">ADP-binding subunit of the dihydroxyacetone kinase, which is responsible for the phosphoenolpyruvate (PEP)-dependent phosphorylation of dihydroxyacetone. DhaL-ADP is converted to DhaL-ATP via a phosphoryl group transfer from DhaM and transmits it to dihydroxyacetone binds to DhaK.</text>
</comment>
<comment type="catalytic activity">
    <reaction evidence="1">
        <text>dihydroxyacetone + phosphoenolpyruvate = dihydroxyacetone phosphate + pyruvate</text>
        <dbReference type="Rhea" id="RHEA:18381"/>
        <dbReference type="ChEBI" id="CHEBI:15361"/>
        <dbReference type="ChEBI" id="CHEBI:16016"/>
        <dbReference type="ChEBI" id="CHEBI:57642"/>
        <dbReference type="ChEBI" id="CHEBI:58702"/>
        <dbReference type="EC" id="2.7.1.121"/>
    </reaction>
</comment>
<comment type="cofactor">
    <cofactor evidence="3">
        <name>Mg(2+)</name>
        <dbReference type="ChEBI" id="CHEBI:18420"/>
    </cofactor>
</comment>
<comment type="pathway">
    <text evidence="5">Polyol metabolism; glycerol degradation.</text>
</comment>
<comment type="subunit">
    <text evidence="3">Homodimer. The dihydroxyacetone kinase complex is composed of a homodimer of DhaM, a homodimer of DhaK and the subunit DhaL.</text>
</comment>
<comment type="subcellular location">
    <subcellularLocation>
        <location evidence="5">Cytoplasm</location>
    </subcellularLocation>
</comment>
<comment type="induction">
    <text evidence="6">Induced by dihydroxyacetone via the DhaQ-DhaS complex.</text>
</comment>
<comment type="miscellaneous">
    <text evidence="6">Unlike the carbohydrate-specific transporters of the PTS, the complex DhaKML has no transport activity.</text>
</comment>
<reference key="1">
    <citation type="journal article" date="2001" name="Genome Res.">
        <title>The complete genome sequence of the lactic acid bacterium Lactococcus lactis ssp. lactis IL1403.</title>
        <authorList>
            <person name="Bolotin A."/>
            <person name="Wincker P."/>
            <person name="Mauger S."/>
            <person name="Jaillon O."/>
            <person name="Malarme K."/>
            <person name="Weissenbach J."/>
            <person name="Ehrlich S.D."/>
            <person name="Sorokin A."/>
        </authorList>
    </citation>
    <scope>NUCLEOTIDE SEQUENCE [LARGE SCALE GENOMIC DNA]</scope>
    <source>
        <strain>IL1403</strain>
    </source>
</reference>
<reference key="2">
    <citation type="journal article" date="2008" name="J. Biol. Chem.">
        <title>X-ray structures of the three Lactococcus lactis dihydroxyacetone kinase subunits and of a transient intersubunit complex.</title>
        <authorList>
            <person name="Zurbriggen A."/>
            <person name="Jeckelmann J.M."/>
            <person name="Christen S."/>
            <person name="Bieniossek C."/>
            <person name="Baumann U."/>
            <person name="Erni B."/>
        </authorList>
    </citation>
    <scope>X-RAY CRYSTALLOGRAPHY (2.1 ANGSTROMS) OF 2-192 IN COMPLEX WITH ADP AND MAGNESIUM ION</scope>
    <scope>FUNCTION</scope>
    <scope>MUTAGENESIS OF ARG-114; ARG-161 AND TYR-164</scope>
    <scope>COFACTOR</scope>
    <scope>INDUCTION</scope>
    <scope>SUBUNIT</scope>
</reference>
<proteinExistence type="evidence at protein level"/>
<gene>
    <name evidence="4" type="primary">dhaL</name>
    <name type="ordered locus">LL0249</name>
    <name type="ORF">L46694</name>
</gene>
<name>DHAL_LACLA</name>
<protein>
    <recommendedName>
        <fullName evidence="4">PTS-dependent dihydroxyacetone kinase, ADP-binding subunit DhaL</fullName>
        <ecNumber evidence="1">2.7.1.121</ecNumber>
    </recommendedName>
</protein>
<dbReference type="EC" id="2.7.1.121" evidence="1"/>
<dbReference type="EMBL" id="AE005176">
    <property type="protein sequence ID" value="AAK04347.1"/>
    <property type="molecule type" value="Genomic_DNA"/>
</dbReference>
<dbReference type="PIR" id="A86656">
    <property type="entry name" value="A86656"/>
</dbReference>
<dbReference type="RefSeq" id="NP_266405.1">
    <property type="nucleotide sequence ID" value="NC_002662.1"/>
</dbReference>
<dbReference type="RefSeq" id="WP_010905236.1">
    <property type="nucleotide sequence ID" value="NC_002662.1"/>
</dbReference>
<dbReference type="PDB" id="3CR3">
    <property type="method" value="X-ray"/>
    <property type="resolution" value="2.10 A"/>
    <property type="chains" value="A/B=2-192"/>
</dbReference>
<dbReference type="PDBsum" id="3CR3"/>
<dbReference type="SMR" id="Q9CIV7"/>
<dbReference type="PaxDb" id="272623-L46694"/>
<dbReference type="EnsemblBacteria" id="AAK04347">
    <property type="protein sequence ID" value="AAK04347"/>
    <property type="gene ID" value="L46694"/>
</dbReference>
<dbReference type="KEGG" id="lla:L46694"/>
<dbReference type="PATRIC" id="fig|272623.7.peg.274"/>
<dbReference type="eggNOG" id="COG1461">
    <property type="taxonomic scope" value="Bacteria"/>
</dbReference>
<dbReference type="HOGENOM" id="CLU_066424_5_0_9"/>
<dbReference type="OrthoDB" id="9800291at2"/>
<dbReference type="UniPathway" id="UPA00616"/>
<dbReference type="EvolutionaryTrace" id="Q9CIV7"/>
<dbReference type="Proteomes" id="UP000002196">
    <property type="component" value="Chromosome"/>
</dbReference>
<dbReference type="GO" id="GO:0005829">
    <property type="term" value="C:cytosol"/>
    <property type="evidence" value="ECO:0007669"/>
    <property type="project" value="TreeGrafter"/>
</dbReference>
<dbReference type="GO" id="GO:0005524">
    <property type="term" value="F:ATP binding"/>
    <property type="evidence" value="ECO:0000314"/>
    <property type="project" value="UniProtKB"/>
</dbReference>
<dbReference type="GO" id="GO:0004371">
    <property type="term" value="F:glycerone kinase activity"/>
    <property type="evidence" value="ECO:0007669"/>
    <property type="project" value="InterPro"/>
</dbReference>
<dbReference type="GO" id="GO:0000287">
    <property type="term" value="F:magnesium ion binding"/>
    <property type="evidence" value="ECO:0000314"/>
    <property type="project" value="UniProtKB"/>
</dbReference>
<dbReference type="GO" id="GO:0047324">
    <property type="term" value="F:phosphoenolpyruvate-glycerone phosphotransferase activity"/>
    <property type="evidence" value="ECO:0000250"/>
    <property type="project" value="UniProtKB"/>
</dbReference>
<dbReference type="GO" id="GO:0019563">
    <property type="term" value="P:glycerol catabolic process"/>
    <property type="evidence" value="ECO:0007669"/>
    <property type="project" value="UniProtKB-UniPathway"/>
</dbReference>
<dbReference type="FunFam" id="1.25.40.340:FF:000002">
    <property type="entry name" value="Dihydroxyacetone kinase, L subunit"/>
    <property type="match status" value="1"/>
</dbReference>
<dbReference type="Gene3D" id="1.25.40.340">
    <property type="match status" value="1"/>
</dbReference>
<dbReference type="InterPro" id="IPR012737">
    <property type="entry name" value="DhaK_L_YcgS"/>
</dbReference>
<dbReference type="InterPro" id="IPR004007">
    <property type="entry name" value="DhaL_dom"/>
</dbReference>
<dbReference type="InterPro" id="IPR036117">
    <property type="entry name" value="DhaL_dom_sf"/>
</dbReference>
<dbReference type="InterPro" id="IPR050861">
    <property type="entry name" value="Dihydroxyacetone_Kinase"/>
</dbReference>
<dbReference type="NCBIfam" id="TIGR02365">
    <property type="entry name" value="dha_L_ycgS"/>
    <property type="match status" value="1"/>
</dbReference>
<dbReference type="PANTHER" id="PTHR28629">
    <property type="entry name" value="TRIOKINASE/FMN CYCLASE"/>
    <property type="match status" value="1"/>
</dbReference>
<dbReference type="PANTHER" id="PTHR28629:SF4">
    <property type="entry name" value="TRIOKINASE_FMN CYCLASE"/>
    <property type="match status" value="1"/>
</dbReference>
<dbReference type="Pfam" id="PF02734">
    <property type="entry name" value="Dak2"/>
    <property type="match status" value="1"/>
</dbReference>
<dbReference type="SMART" id="SM01120">
    <property type="entry name" value="Dak2"/>
    <property type="match status" value="1"/>
</dbReference>
<dbReference type="SUPFAM" id="SSF101473">
    <property type="entry name" value="DhaL-like"/>
    <property type="match status" value="1"/>
</dbReference>
<dbReference type="PROSITE" id="PS51480">
    <property type="entry name" value="DHAL"/>
    <property type="match status" value="1"/>
</dbReference>
<accession>Q9CIV7</accession>
<organism>
    <name type="scientific">Lactococcus lactis subsp. lactis (strain IL1403)</name>
    <name type="common">Streptococcus lactis</name>
    <dbReference type="NCBI Taxonomy" id="272623"/>
    <lineage>
        <taxon>Bacteria</taxon>
        <taxon>Bacillati</taxon>
        <taxon>Bacillota</taxon>
        <taxon>Bacilli</taxon>
        <taxon>Lactobacillales</taxon>
        <taxon>Streptococcaceae</taxon>
        <taxon>Lactococcus</taxon>
    </lineage>
</organism>
<keyword id="KW-0002">3D-structure</keyword>
<keyword id="KW-0067">ATP-binding</keyword>
<keyword id="KW-0963">Cytoplasm</keyword>
<keyword id="KW-0319">Glycerol metabolism</keyword>
<keyword id="KW-0418">Kinase</keyword>
<keyword id="KW-0460">Magnesium</keyword>
<keyword id="KW-0479">Metal-binding</keyword>
<keyword id="KW-0547">Nucleotide-binding</keyword>
<keyword id="KW-1185">Reference proteome</keyword>
<keyword id="KW-0808">Transferase</keyword>